<evidence type="ECO:0000250" key="1">
    <source>
        <dbReference type="UniProtKB" id="Q12778"/>
    </source>
</evidence>
<evidence type="ECO:0000250" key="2">
    <source>
        <dbReference type="UniProtKB" id="Q66JJ0"/>
    </source>
</evidence>
<evidence type="ECO:0000250" key="3">
    <source>
        <dbReference type="UniProtKB" id="Q9R1E0"/>
    </source>
</evidence>
<evidence type="ECO:0000255" key="4">
    <source>
        <dbReference type="PROSITE-ProRule" id="PRU00089"/>
    </source>
</evidence>
<evidence type="ECO:0000256" key="5">
    <source>
        <dbReference type="SAM" id="MobiDB-lite"/>
    </source>
</evidence>
<evidence type="ECO:0000269" key="6">
    <source>
    </source>
</evidence>
<evidence type="ECO:0000303" key="7">
    <source>
    </source>
</evidence>
<evidence type="ECO:0000305" key="8"/>
<evidence type="ECO:0000312" key="9">
    <source>
        <dbReference type="EMBL" id="CAH04456.1"/>
    </source>
</evidence>
<organism>
    <name type="scientific">Xenopus laevis</name>
    <name type="common">African clawed frog</name>
    <dbReference type="NCBI Taxonomy" id="8355"/>
    <lineage>
        <taxon>Eukaryota</taxon>
        <taxon>Metazoa</taxon>
        <taxon>Chordata</taxon>
        <taxon>Craniata</taxon>
        <taxon>Vertebrata</taxon>
        <taxon>Euteleostomi</taxon>
        <taxon>Amphibia</taxon>
        <taxon>Batrachia</taxon>
        <taxon>Anura</taxon>
        <taxon>Pipoidea</taxon>
        <taxon>Pipidae</taxon>
        <taxon>Xenopodinae</taxon>
        <taxon>Xenopus</taxon>
        <taxon>Xenopus</taxon>
    </lineage>
</organism>
<dbReference type="EMBL" id="AJ783963">
    <property type="protein sequence ID" value="CAH04456.1"/>
    <property type="molecule type" value="mRNA"/>
</dbReference>
<dbReference type="RefSeq" id="NP_001086417.1">
    <property type="nucleotide sequence ID" value="NM_001092948.1"/>
</dbReference>
<dbReference type="SMR" id="Q6EUW2"/>
<dbReference type="GeneID" id="444991"/>
<dbReference type="KEGG" id="xla:444991"/>
<dbReference type="AGR" id="Xenbase:XB-GENE-482532"/>
<dbReference type="CTD" id="444991"/>
<dbReference type="Xenbase" id="XB-GENE-482532">
    <property type="gene designation" value="foxo1.L"/>
</dbReference>
<dbReference type="OrthoDB" id="5954824at2759"/>
<dbReference type="Proteomes" id="UP000186698">
    <property type="component" value="Chromosome 2L"/>
</dbReference>
<dbReference type="Bgee" id="444991">
    <property type="expression patterns" value="Expressed in spleen and 18 other cell types or tissues"/>
</dbReference>
<dbReference type="GO" id="GO:0005737">
    <property type="term" value="C:cytoplasm"/>
    <property type="evidence" value="ECO:0000250"/>
    <property type="project" value="UniProtKB"/>
</dbReference>
<dbReference type="GO" id="GO:0005829">
    <property type="term" value="C:cytosol"/>
    <property type="evidence" value="ECO:0000250"/>
    <property type="project" value="UniProtKB"/>
</dbReference>
<dbReference type="GO" id="GO:0005739">
    <property type="term" value="C:mitochondrion"/>
    <property type="evidence" value="ECO:0000250"/>
    <property type="project" value="UniProtKB"/>
</dbReference>
<dbReference type="GO" id="GO:0005634">
    <property type="term" value="C:nucleus"/>
    <property type="evidence" value="ECO:0000250"/>
    <property type="project" value="UniProtKB"/>
</dbReference>
<dbReference type="GO" id="GO:0003682">
    <property type="term" value="F:chromatin binding"/>
    <property type="evidence" value="ECO:0000250"/>
    <property type="project" value="UniProtKB"/>
</dbReference>
<dbReference type="GO" id="GO:0001228">
    <property type="term" value="F:DNA-binding transcription activator activity, RNA polymerase II-specific"/>
    <property type="evidence" value="ECO:0000250"/>
    <property type="project" value="UniProtKB"/>
</dbReference>
<dbReference type="GO" id="GO:0000981">
    <property type="term" value="F:DNA-binding transcription factor activity, RNA polymerase II-specific"/>
    <property type="evidence" value="ECO:0000318"/>
    <property type="project" value="GO_Central"/>
</dbReference>
<dbReference type="GO" id="GO:0000978">
    <property type="term" value="F:RNA polymerase II cis-regulatory region sequence-specific DNA binding"/>
    <property type="evidence" value="ECO:0000318"/>
    <property type="project" value="GO_Central"/>
</dbReference>
<dbReference type="GO" id="GO:0043565">
    <property type="term" value="F:sequence-specific DNA binding"/>
    <property type="evidence" value="ECO:0000250"/>
    <property type="project" value="UniProtKB"/>
</dbReference>
<dbReference type="GO" id="GO:0070417">
    <property type="term" value="P:cellular response to cold"/>
    <property type="evidence" value="ECO:0000250"/>
    <property type="project" value="UniProtKB"/>
</dbReference>
<dbReference type="GO" id="GO:0071455">
    <property type="term" value="P:cellular response to hyperoxia"/>
    <property type="evidence" value="ECO:0000250"/>
    <property type="project" value="UniProtKB"/>
</dbReference>
<dbReference type="GO" id="GO:0009267">
    <property type="term" value="P:cellular response to starvation"/>
    <property type="evidence" value="ECO:0000250"/>
    <property type="project" value="UniProtKB"/>
</dbReference>
<dbReference type="GO" id="GO:0097009">
    <property type="term" value="P:energy homeostasis"/>
    <property type="evidence" value="ECO:0000250"/>
    <property type="project" value="UniProtKB"/>
</dbReference>
<dbReference type="GO" id="GO:0045444">
    <property type="term" value="P:fat cell differentiation"/>
    <property type="evidence" value="ECO:0000250"/>
    <property type="project" value="UniProtKB"/>
</dbReference>
<dbReference type="GO" id="GO:0008286">
    <property type="term" value="P:insulin receptor signaling pathway"/>
    <property type="evidence" value="ECO:0000318"/>
    <property type="project" value="GO_Central"/>
</dbReference>
<dbReference type="GO" id="GO:0001678">
    <property type="term" value="P:intracellular glucose homeostasis"/>
    <property type="evidence" value="ECO:0000250"/>
    <property type="project" value="UniProtKB"/>
</dbReference>
<dbReference type="GO" id="GO:0043066">
    <property type="term" value="P:negative regulation of apoptotic process"/>
    <property type="evidence" value="ECO:0000250"/>
    <property type="project" value="UniProtKB"/>
</dbReference>
<dbReference type="GO" id="GO:0045892">
    <property type="term" value="P:negative regulation of DNA-templated transcription"/>
    <property type="evidence" value="ECO:0000250"/>
    <property type="project" value="UniProtKB"/>
</dbReference>
<dbReference type="GO" id="GO:0046676">
    <property type="term" value="P:negative regulation of insulin secretion"/>
    <property type="evidence" value="ECO:0000250"/>
    <property type="project" value="UniProtKB"/>
</dbReference>
<dbReference type="GO" id="GO:0043065">
    <property type="term" value="P:positive regulation of apoptotic process"/>
    <property type="evidence" value="ECO:0000250"/>
    <property type="project" value="UniProtKB"/>
</dbReference>
<dbReference type="GO" id="GO:0010508">
    <property type="term" value="P:positive regulation of autophagy"/>
    <property type="evidence" value="ECO:0000250"/>
    <property type="project" value="UniProtKB"/>
</dbReference>
<dbReference type="GO" id="GO:0045893">
    <property type="term" value="P:positive regulation of DNA-templated transcription"/>
    <property type="evidence" value="ECO:0000250"/>
    <property type="project" value="UniProtKB"/>
</dbReference>
<dbReference type="GO" id="GO:0045722">
    <property type="term" value="P:positive regulation of gluconeogenesis"/>
    <property type="evidence" value="ECO:0000250"/>
    <property type="project" value="UniProtKB"/>
</dbReference>
<dbReference type="GO" id="GO:0045732">
    <property type="term" value="P:positive regulation of protein catabolic process"/>
    <property type="evidence" value="ECO:0000250"/>
    <property type="project" value="UniProtKB"/>
</dbReference>
<dbReference type="GO" id="GO:0045944">
    <property type="term" value="P:positive regulation of transcription by RNA polymerase II"/>
    <property type="evidence" value="ECO:0000250"/>
    <property type="project" value="UniProtKB"/>
</dbReference>
<dbReference type="GO" id="GO:0006473">
    <property type="term" value="P:protein acetylation"/>
    <property type="evidence" value="ECO:0000250"/>
    <property type="project" value="UniProtKB"/>
</dbReference>
<dbReference type="GO" id="GO:0006357">
    <property type="term" value="P:regulation of transcription by RNA polymerase II"/>
    <property type="evidence" value="ECO:0000318"/>
    <property type="project" value="GO_Central"/>
</dbReference>
<dbReference type="GO" id="GO:0070542">
    <property type="term" value="P:response to fatty acid"/>
    <property type="evidence" value="ECO:0000250"/>
    <property type="project" value="UniProtKB"/>
</dbReference>
<dbReference type="GO" id="GO:0001659">
    <property type="term" value="P:temperature homeostasis"/>
    <property type="evidence" value="ECO:0000250"/>
    <property type="project" value="UniProtKB"/>
</dbReference>
<dbReference type="CDD" id="cd20060">
    <property type="entry name" value="FH_FOXO1"/>
    <property type="match status" value="1"/>
</dbReference>
<dbReference type="FunFam" id="1.10.10.10:FF:000032">
    <property type="entry name" value="Forkhead box protein O4"/>
    <property type="match status" value="1"/>
</dbReference>
<dbReference type="Gene3D" id="1.10.10.10">
    <property type="entry name" value="Winged helix-like DNA-binding domain superfamily/Winged helix DNA-binding domain"/>
    <property type="match status" value="1"/>
</dbReference>
<dbReference type="InterPro" id="IPR047408">
    <property type="entry name" value="FH_FOXO1"/>
</dbReference>
<dbReference type="InterPro" id="IPR001766">
    <property type="entry name" value="Fork_head_dom"/>
</dbReference>
<dbReference type="InterPro" id="IPR032067">
    <property type="entry name" value="FOXO-TAD"/>
</dbReference>
<dbReference type="InterPro" id="IPR032068">
    <property type="entry name" value="FOXO_KIX-bd"/>
</dbReference>
<dbReference type="InterPro" id="IPR030456">
    <property type="entry name" value="TF_fork_head_CS_2"/>
</dbReference>
<dbReference type="InterPro" id="IPR036388">
    <property type="entry name" value="WH-like_DNA-bd_sf"/>
</dbReference>
<dbReference type="InterPro" id="IPR036390">
    <property type="entry name" value="WH_DNA-bd_sf"/>
</dbReference>
<dbReference type="PANTHER" id="PTHR45767">
    <property type="entry name" value="FORKHEAD BOX PROTEIN O"/>
    <property type="match status" value="1"/>
</dbReference>
<dbReference type="PANTHER" id="PTHR45767:SF1">
    <property type="entry name" value="FORKHEAD BOX PROTEIN O1"/>
    <property type="match status" value="1"/>
</dbReference>
<dbReference type="Pfam" id="PF00250">
    <property type="entry name" value="Forkhead"/>
    <property type="match status" value="1"/>
</dbReference>
<dbReference type="Pfam" id="PF16676">
    <property type="entry name" value="FOXO-TAD"/>
    <property type="match status" value="1"/>
</dbReference>
<dbReference type="Pfam" id="PF16675">
    <property type="entry name" value="FOXO_KIX_bdg"/>
    <property type="match status" value="1"/>
</dbReference>
<dbReference type="PRINTS" id="PR00053">
    <property type="entry name" value="FORKHEAD"/>
</dbReference>
<dbReference type="SMART" id="SM00339">
    <property type="entry name" value="FH"/>
    <property type="match status" value="1"/>
</dbReference>
<dbReference type="SUPFAM" id="SSF46785">
    <property type="entry name" value="Winged helix' DNA-binding domain"/>
    <property type="match status" value="1"/>
</dbReference>
<dbReference type="PROSITE" id="PS00658">
    <property type="entry name" value="FORK_HEAD_2"/>
    <property type="match status" value="1"/>
</dbReference>
<dbReference type="PROSITE" id="PS50039">
    <property type="entry name" value="FORK_HEAD_3"/>
    <property type="match status" value="1"/>
</dbReference>
<reference evidence="8 9" key="1">
    <citation type="journal article" date="2004" name="Gene Expr. Patterns">
        <title>The FoxO-subclass in Xenopus laevis development.</title>
        <authorList>
            <person name="Pohl B.S."/>
            <person name="Schoen C."/>
            <person name="Roessner A."/>
            <person name="Knoechel W."/>
        </authorList>
    </citation>
    <scope>NUCLEOTIDE SEQUENCE [MRNA]</scope>
    <scope>TISSUE SPECIFICITY</scope>
    <scope>DEVELOPMENTAL STAGE</scope>
    <source>
        <tissue evidence="6">Tadpole</tissue>
    </source>
</reference>
<proteinExistence type="evidence at transcript level"/>
<name>FOXO1_XENLA</name>
<comment type="function">
    <text evidence="1 3">Transcription factor that regulates metabolic homeostasis in response to oxidative stress. Binds to the consensus sequence 5'-TT[G/A]TTTTG-3' and the related Daf-16 family binding element (DBE) with consensus sequence 5'-TT[G/A]TTTAC-3'. Main regulator of redox balance and osteoblast numbers and controls bone mass. Orchestrates the endocrine function of the skeleton in regulating glucose metabolism. Also acts as a key regulator of chondrogenic commitment of skeletal progenitor cells in response to lipid availability: when lipids levels are low, translocates to the nucleus and promotes expression of sox9, which induces chondrogenic commitment and suppresses fatty acid oxidation. Acts synergistically with atf4 to suppress osteocalcin/bglap activity, increasing glucose levels and triggering glucose intolerance and insulin insensitivity. Also suppresses the transcriptional activity of runx2, an upstream activator of osteocalcin/bglap. May act as a positive regulator of apoptosis in cardiac smooth muscle cells as a result of its transcriptional activation of pro-apoptotic genes (By similarity).</text>
</comment>
<comment type="subcellular location">
    <subcellularLocation>
        <location evidence="3">Cytoplasm</location>
    </subcellularLocation>
    <subcellularLocation>
        <location evidence="3">Nucleus</location>
    </subcellularLocation>
    <text evidence="3">Shuttles between the cytoplasm and nucleus.</text>
</comment>
<comment type="tissue specificity">
    <text evidence="6">Localized to the animal hemisphere during early cleavage stages. At early tadpole stages, expressed in the branchial arches, pronephros and liver. Within the head, expressed in the forming thyroid gland and in head mesenchyme anterior to the eyes.</text>
</comment>
<comment type="developmental stage">
    <text evidence="6">Expressed both maternally and zygotically. Maternal expression decreases during early cleavage stages becoming absent during gastrulation. Zygotic expression begins during neurulation with expression levels increasing as development progresses.</text>
</comment>
<comment type="PTM">
    <text evidence="3">Phosphorylated by AKT1; insulin-induced.</text>
</comment>
<comment type="PTM">
    <text evidence="1">IGF1 rapidly induces phosphorylation of Thr-28, Ser-245 and Ser-308. Phosphorylation of Ser-245 decreases DNA-binding activity and promotes the phosphorylation of Thr-28, and Ser-308, which leads to nuclear exclusion and loss of function. Phosphorylation of Ser-318 is independent of IGF1 and leads to reduced function (By similarity).</text>
</comment>
<sequence length="631" mass="68468">MAEAPQPPPPLVEIDPDFEPFSRPRSCTWPLPRPEFNPSSSANSSPAPSLQPEPAAGNVDFLSNLSLLEESEDFDPAEALGVCGDFPCQDIRQLQPPIPQQQQQHSQQQQEALTLLAPSVPSALSPASSPSPLGAQQPRKSSSSRRNAWGNLSYADLISQAIESSPEKRLTLSQIYDWMVKSVPYFKDKGDSNSSAGWKNSIRHNLSLHSKFVRVQNEGTGKSSWWILNPEGGKNGKSPRRRAASMDNNSKFAKSRGRAAKKKASMQSSQDGSSDSPGSQFSKWPGSPSSQSNDDFEAWSTFRPRTSSNASTISGRLSPIMPEQDDLGDADVHNLVYPSSATKLTSTLPSLSEMGNSENMENLLDNLNLLTPNSSTQSSPASMMQQSGYLFTSPNTSLGSPNSEYRKYSYAQTGISPISQMPMQTVPENKSGYRAVGQYPVPAGLLKELLTSDSPPHNDILTPVDPAVSQANNRVLGQNSLIGSNSIMPAYGSQPAPNKMSSHPHLHQPNHPTSINGRPIAHNPGINRLSTVKTSVQVPMPHQPIQMTSMGSYSMNSCNGYGRVGIVSIHQEILPSDLDDMLIESLDCDVESIIRNDLMEDGEADFNFDSILPNQSFPHSVTTTTHSWVSG</sequence>
<keyword id="KW-0963">Cytoplasm</keyword>
<keyword id="KW-0238">DNA-binding</keyword>
<keyword id="KW-0539">Nucleus</keyword>
<keyword id="KW-0597">Phosphoprotein</keyword>
<keyword id="KW-1185">Reference proteome</keyword>
<keyword id="KW-0804">Transcription</keyword>
<keyword id="KW-0805">Transcription regulation</keyword>
<protein>
    <recommendedName>
        <fullName>Forkhead box protein O1</fullName>
        <shortName>FoxO1</shortName>
        <shortName>xFoxO1</shortName>
    </recommendedName>
    <alternativeName>
        <fullName>FoxO1A</fullName>
    </alternativeName>
</protein>
<gene>
    <name evidence="7" type="primary">foxo1</name>
    <name evidence="2" type="synonym">foxo1a</name>
</gene>
<accession>Q6EUW2</accession>
<feature type="chain" id="PRO_0000270986" description="Forkhead box protein O1">
    <location>
        <begin position="1"/>
        <end position="631"/>
    </location>
</feature>
<feature type="DNA-binding region" description="Fork-head" evidence="4">
    <location>
        <begin position="149"/>
        <end position="243"/>
    </location>
</feature>
<feature type="region of interest" description="Disordered" evidence="5">
    <location>
        <begin position="1"/>
        <end position="57"/>
    </location>
</feature>
<feature type="region of interest" description="Disordered" evidence="5">
    <location>
        <begin position="90"/>
        <end position="147"/>
    </location>
</feature>
<feature type="region of interest" description="Disordered" evidence="5">
    <location>
        <begin position="223"/>
        <end position="324"/>
    </location>
</feature>
<feature type="region of interest" description="Disordered" evidence="5">
    <location>
        <begin position="372"/>
        <end position="404"/>
    </location>
</feature>
<feature type="compositionally biased region" description="Pro residues" evidence="5">
    <location>
        <begin position="1"/>
        <end position="11"/>
    </location>
</feature>
<feature type="compositionally biased region" description="Low complexity" evidence="5">
    <location>
        <begin position="37"/>
        <end position="48"/>
    </location>
</feature>
<feature type="compositionally biased region" description="Low complexity" evidence="5">
    <location>
        <begin position="100"/>
        <end position="135"/>
    </location>
</feature>
<feature type="compositionally biased region" description="Basic residues" evidence="5">
    <location>
        <begin position="253"/>
        <end position="264"/>
    </location>
</feature>
<feature type="compositionally biased region" description="Low complexity" evidence="5">
    <location>
        <begin position="265"/>
        <end position="282"/>
    </location>
</feature>
<feature type="compositionally biased region" description="Polar residues" evidence="5">
    <location>
        <begin position="303"/>
        <end position="315"/>
    </location>
</feature>
<feature type="compositionally biased region" description="Polar residues" evidence="5">
    <location>
        <begin position="381"/>
        <end position="403"/>
    </location>
</feature>